<proteinExistence type="inferred from homology"/>
<name>SYL_SHEFN</name>
<reference key="1">
    <citation type="submission" date="2006-08" db="EMBL/GenBank/DDBJ databases">
        <title>Complete sequence of Shewanella frigidimarina NCIMB 400.</title>
        <authorList>
            <consortium name="US DOE Joint Genome Institute"/>
            <person name="Copeland A."/>
            <person name="Lucas S."/>
            <person name="Lapidus A."/>
            <person name="Barry K."/>
            <person name="Detter J.C."/>
            <person name="Glavina del Rio T."/>
            <person name="Hammon N."/>
            <person name="Israni S."/>
            <person name="Dalin E."/>
            <person name="Tice H."/>
            <person name="Pitluck S."/>
            <person name="Fredrickson J.K."/>
            <person name="Kolker E."/>
            <person name="McCuel L.A."/>
            <person name="DiChristina T."/>
            <person name="Nealson K.H."/>
            <person name="Newman D."/>
            <person name="Tiedje J.M."/>
            <person name="Zhou J."/>
            <person name="Romine M.F."/>
            <person name="Culley D.E."/>
            <person name="Serres M."/>
            <person name="Chertkov O."/>
            <person name="Brettin T."/>
            <person name="Bruce D."/>
            <person name="Han C."/>
            <person name="Tapia R."/>
            <person name="Gilna P."/>
            <person name="Schmutz J."/>
            <person name="Larimer F."/>
            <person name="Land M."/>
            <person name="Hauser L."/>
            <person name="Kyrpides N."/>
            <person name="Mikhailova N."/>
            <person name="Richardson P."/>
        </authorList>
    </citation>
    <scope>NUCLEOTIDE SEQUENCE [LARGE SCALE GENOMIC DNA]</scope>
    <source>
        <strain>NCIMB 400</strain>
    </source>
</reference>
<dbReference type="EC" id="6.1.1.4" evidence="1"/>
<dbReference type="EMBL" id="CP000447">
    <property type="protein sequence ID" value="ABI70563.1"/>
    <property type="status" value="ALT_INIT"/>
    <property type="molecule type" value="Genomic_DNA"/>
</dbReference>
<dbReference type="RefSeq" id="WP_041413368.1">
    <property type="nucleotide sequence ID" value="NC_008345.1"/>
</dbReference>
<dbReference type="SMR" id="Q087K2"/>
<dbReference type="STRING" id="318167.Sfri_0705"/>
<dbReference type="KEGG" id="sfr:Sfri_0705"/>
<dbReference type="eggNOG" id="COG0495">
    <property type="taxonomic scope" value="Bacteria"/>
</dbReference>
<dbReference type="HOGENOM" id="CLU_004427_0_0_6"/>
<dbReference type="OrthoDB" id="9810365at2"/>
<dbReference type="Proteomes" id="UP000000684">
    <property type="component" value="Chromosome"/>
</dbReference>
<dbReference type="GO" id="GO:0005829">
    <property type="term" value="C:cytosol"/>
    <property type="evidence" value="ECO:0007669"/>
    <property type="project" value="TreeGrafter"/>
</dbReference>
<dbReference type="GO" id="GO:0002161">
    <property type="term" value="F:aminoacyl-tRNA deacylase activity"/>
    <property type="evidence" value="ECO:0007669"/>
    <property type="project" value="InterPro"/>
</dbReference>
<dbReference type="GO" id="GO:0005524">
    <property type="term" value="F:ATP binding"/>
    <property type="evidence" value="ECO:0007669"/>
    <property type="project" value="UniProtKB-UniRule"/>
</dbReference>
<dbReference type="GO" id="GO:0004823">
    <property type="term" value="F:leucine-tRNA ligase activity"/>
    <property type="evidence" value="ECO:0007669"/>
    <property type="project" value="UniProtKB-UniRule"/>
</dbReference>
<dbReference type="GO" id="GO:0006429">
    <property type="term" value="P:leucyl-tRNA aminoacylation"/>
    <property type="evidence" value="ECO:0007669"/>
    <property type="project" value="UniProtKB-UniRule"/>
</dbReference>
<dbReference type="CDD" id="cd07958">
    <property type="entry name" value="Anticodon_Ia_Leu_BEm"/>
    <property type="match status" value="1"/>
</dbReference>
<dbReference type="CDD" id="cd00812">
    <property type="entry name" value="LeuRS_core"/>
    <property type="match status" value="1"/>
</dbReference>
<dbReference type="FunFam" id="1.10.730.10:FF:000003">
    <property type="entry name" value="Leucine--tRNA ligase"/>
    <property type="match status" value="1"/>
</dbReference>
<dbReference type="FunFam" id="2.20.28.290:FF:000001">
    <property type="entry name" value="Leucine--tRNA ligase"/>
    <property type="match status" value="1"/>
</dbReference>
<dbReference type="FunFam" id="3.10.20.590:FF:000001">
    <property type="entry name" value="Leucine--tRNA ligase"/>
    <property type="match status" value="1"/>
</dbReference>
<dbReference type="FunFam" id="3.40.50.620:FF:000003">
    <property type="entry name" value="Leucine--tRNA ligase"/>
    <property type="match status" value="1"/>
</dbReference>
<dbReference type="FunFam" id="3.40.50.620:FF:000124">
    <property type="entry name" value="Leucine--tRNA ligase"/>
    <property type="match status" value="1"/>
</dbReference>
<dbReference type="FunFam" id="3.90.740.10:FF:000012">
    <property type="entry name" value="Leucine--tRNA ligase"/>
    <property type="match status" value="1"/>
</dbReference>
<dbReference type="Gene3D" id="2.20.28.290">
    <property type="match status" value="1"/>
</dbReference>
<dbReference type="Gene3D" id="3.10.20.590">
    <property type="match status" value="1"/>
</dbReference>
<dbReference type="Gene3D" id="3.40.50.620">
    <property type="entry name" value="HUPs"/>
    <property type="match status" value="2"/>
</dbReference>
<dbReference type="Gene3D" id="1.10.730.10">
    <property type="entry name" value="Isoleucyl-tRNA Synthetase, Domain 1"/>
    <property type="match status" value="1"/>
</dbReference>
<dbReference type="Gene3D" id="3.90.740.10">
    <property type="entry name" value="Valyl/Leucyl/Isoleucyl-tRNA synthetase, editing domain"/>
    <property type="match status" value="1"/>
</dbReference>
<dbReference type="HAMAP" id="MF_00049_B">
    <property type="entry name" value="Leu_tRNA_synth_B"/>
    <property type="match status" value="1"/>
</dbReference>
<dbReference type="InterPro" id="IPR001412">
    <property type="entry name" value="aa-tRNA-synth_I_CS"/>
</dbReference>
<dbReference type="InterPro" id="IPR002300">
    <property type="entry name" value="aa-tRNA-synth_Ia"/>
</dbReference>
<dbReference type="InterPro" id="IPR002302">
    <property type="entry name" value="Leu-tRNA-ligase"/>
</dbReference>
<dbReference type="InterPro" id="IPR025709">
    <property type="entry name" value="Leu_tRNA-synth_edit"/>
</dbReference>
<dbReference type="InterPro" id="IPR013155">
    <property type="entry name" value="M/V/L/I-tRNA-synth_anticd-bd"/>
</dbReference>
<dbReference type="InterPro" id="IPR015413">
    <property type="entry name" value="Methionyl/Leucyl_tRNA_Synth"/>
</dbReference>
<dbReference type="InterPro" id="IPR014729">
    <property type="entry name" value="Rossmann-like_a/b/a_fold"/>
</dbReference>
<dbReference type="InterPro" id="IPR009080">
    <property type="entry name" value="tRNAsynth_Ia_anticodon-bd"/>
</dbReference>
<dbReference type="InterPro" id="IPR009008">
    <property type="entry name" value="Val/Leu/Ile-tRNA-synth_edit"/>
</dbReference>
<dbReference type="NCBIfam" id="TIGR00396">
    <property type="entry name" value="leuS_bact"/>
    <property type="match status" value="1"/>
</dbReference>
<dbReference type="PANTHER" id="PTHR43740:SF2">
    <property type="entry name" value="LEUCINE--TRNA LIGASE, MITOCHONDRIAL"/>
    <property type="match status" value="1"/>
</dbReference>
<dbReference type="PANTHER" id="PTHR43740">
    <property type="entry name" value="LEUCYL-TRNA SYNTHETASE"/>
    <property type="match status" value="1"/>
</dbReference>
<dbReference type="Pfam" id="PF08264">
    <property type="entry name" value="Anticodon_1"/>
    <property type="match status" value="1"/>
</dbReference>
<dbReference type="Pfam" id="PF00133">
    <property type="entry name" value="tRNA-synt_1"/>
    <property type="match status" value="2"/>
</dbReference>
<dbReference type="Pfam" id="PF13603">
    <property type="entry name" value="tRNA-synt_1_2"/>
    <property type="match status" value="1"/>
</dbReference>
<dbReference type="Pfam" id="PF09334">
    <property type="entry name" value="tRNA-synt_1g"/>
    <property type="match status" value="1"/>
</dbReference>
<dbReference type="PRINTS" id="PR00985">
    <property type="entry name" value="TRNASYNTHLEU"/>
</dbReference>
<dbReference type="SUPFAM" id="SSF47323">
    <property type="entry name" value="Anticodon-binding domain of a subclass of class I aminoacyl-tRNA synthetases"/>
    <property type="match status" value="1"/>
</dbReference>
<dbReference type="SUPFAM" id="SSF52374">
    <property type="entry name" value="Nucleotidylyl transferase"/>
    <property type="match status" value="1"/>
</dbReference>
<dbReference type="SUPFAM" id="SSF50677">
    <property type="entry name" value="ValRS/IleRS/LeuRS editing domain"/>
    <property type="match status" value="1"/>
</dbReference>
<dbReference type="PROSITE" id="PS00178">
    <property type="entry name" value="AA_TRNA_LIGASE_I"/>
    <property type="match status" value="1"/>
</dbReference>
<evidence type="ECO:0000255" key="1">
    <source>
        <dbReference type="HAMAP-Rule" id="MF_00049"/>
    </source>
</evidence>
<evidence type="ECO:0000305" key="2"/>
<protein>
    <recommendedName>
        <fullName evidence="1">Leucine--tRNA ligase</fullName>
        <ecNumber evidence="1">6.1.1.4</ecNumber>
    </recommendedName>
    <alternativeName>
        <fullName evidence="1">Leucyl-tRNA synthetase</fullName>
        <shortName evidence="1">LeuRS</shortName>
    </alternativeName>
</protein>
<sequence>MQELYNPSEIEALVQKHWHEHKTFEVTEDESKEKFYCLSMFPYPSGRLHMGHVRNYTIGDVVARYQRLQGKNVLQPIGWDSFGLPAENAAINNKASPAPWTYENIDYMKNQLKLLGFGYDWSREIATCTPEYYRWEQWFFTQLYAKGLVYKKTSSVNWCPNDETVLANEQVQDGCCWRCDTEVIQKEIPQWFIKITDYAEELLNDIDTLDGWPEQVKAMQRNWIGRSEGIEMTFAVADSDASFDIYTTRPDTLMGVTYVAIAAGHPLAEQSAQNNPELAAFLEECKNADTTEAAMASMEKKGVATGLQAIHPISGKLVPIWVANFVLMNYGTGAVMSVPAHDQRDYEFATKYQLAIEAVIKPVDGEVDVSKEAYTEKGVVFNSGDAFPELDGLDFQAAFEAIDARLTAEGKGKRQVNYRLRDWGVSRQRYWGAPIPMVTLADGTVVPTPEDQLPVILPEDVVMDGIQSPIKADKAWAETTVNGQPATRETDTFDTFMESSWYYARYCSPHADEMLDPAKANYWLPVDQYIGGIEHACMHLLYFRFFHKLLRDAGLVNSDEPAKQLLTQGMVLADAYYYTNEKGARVWVSPLEVTVVEKDDKGRIIKAIDNQGHELVYTGMSKMSKSKNNGIDPQVMVEKYGADTVRLFMMFASPPELTLEWQESGVEGAHRFIKRFWKLASDHVAAGKTEALDTSKLNADQKALRRELHKTIAKVSDDIARRQMFNTAVASVMELMNHLLKASQETAQDRALLAEALSAVTRLLYPIVPHMTFTLWNELGNEGDIEDSRWPEVDESALVEDSKLIVVQVNGKVRAKITVAADASKEDVEALGMSDEHVQKHTEGLTVRKVIYVPGKLLSIVAN</sequence>
<feature type="chain" id="PRO_0000334817" description="Leucine--tRNA ligase">
    <location>
        <begin position="1"/>
        <end position="863"/>
    </location>
</feature>
<feature type="short sequence motif" description="'HIGH' region">
    <location>
        <begin position="42"/>
        <end position="52"/>
    </location>
</feature>
<feature type="short sequence motif" description="'KMSKS' region">
    <location>
        <begin position="622"/>
        <end position="626"/>
    </location>
</feature>
<feature type="binding site" evidence="1">
    <location>
        <position position="625"/>
    </location>
    <ligand>
        <name>ATP</name>
        <dbReference type="ChEBI" id="CHEBI:30616"/>
    </ligand>
</feature>
<accession>Q087K2</accession>
<gene>
    <name evidence="1" type="primary">leuS</name>
    <name type="ordered locus">Sfri_0705</name>
</gene>
<organism>
    <name type="scientific">Shewanella frigidimarina (strain NCIMB 400)</name>
    <dbReference type="NCBI Taxonomy" id="318167"/>
    <lineage>
        <taxon>Bacteria</taxon>
        <taxon>Pseudomonadati</taxon>
        <taxon>Pseudomonadota</taxon>
        <taxon>Gammaproteobacteria</taxon>
        <taxon>Alteromonadales</taxon>
        <taxon>Shewanellaceae</taxon>
        <taxon>Shewanella</taxon>
    </lineage>
</organism>
<comment type="catalytic activity">
    <reaction evidence="1">
        <text>tRNA(Leu) + L-leucine + ATP = L-leucyl-tRNA(Leu) + AMP + diphosphate</text>
        <dbReference type="Rhea" id="RHEA:11688"/>
        <dbReference type="Rhea" id="RHEA-COMP:9613"/>
        <dbReference type="Rhea" id="RHEA-COMP:9622"/>
        <dbReference type="ChEBI" id="CHEBI:30616"/>
        <dbReference type="ChEBI" id="CHEBI:33019"/>
        <dbReference type="ChEBI" id="CHEBI:57427"/>
        <dbReference type="ChEBI" id="CHEBI:78442"/>
        <dbReference type="ChEBI" id="CHEBI:78494"/>
        <dbReference type="ChEBI" id="CHEBI:456215"/>
        <dbReference type="EC" id="6.1.1.4"/>
    </reaction>
</comment>
<comment type="subcellular location">
    <subcellularLocation>
        <location evidence="1">Cytoplasm</location>
    </subcellularLocation>
</comment>
<comment type="similarity">
    <text evidence="1">Belongs to the class-I aminoacyl-tRNA synthetase family.</text>
</comment>
<comment type="sequence caution" evidence="2">
    <conflict type="erroneous initiation">
        <sequence resource="EMBL-CDS" id="ABI70563"/>
    </conflict>
</comment>
<keyword id="KW-0030">Aminoacyl-tRNA synthetase</keyword>
<keyword id="KW-0067">ATP-binding</keyword>
<keyword id="KW-0963">Cytoplasm</keyword>
<keyword id="KW-0436">Ligase</keyword>
<keyword id="KW-0547">Nucleotide-binding</keyword>
<keyword id="KW-0648">Protein biosynthesis</keyword>
<keyword id="KW-1185">Reference proteome</keyword>